<evidence type="ECO:0000250" key="1"/>
<evidence type="ECO:0000250" key="2">
    <source>
        <dbReference type="UniProtKB" id="P62894"/>
    </source>
</evidence>
<evidence type="ECO:0000250" key="3">
    <source>
        <dbReference type="UniProtKB" id="P62897"/>
    </source>
</evidence>
<evidence type="ECO:0000269" key="4">
    <source>
    </source>
</evidence>
<evidence type="ECO:0000305" key="5"/>
<protein>
    <recommendedName>
        <fullName>Cytochrome c</fullName>
    </recommendedName>
</protein>
<sequence>MGDVEKGKKIFVQKCAQCHTVEKGGKHKTGPNLHGLFGRKTGQAVGFSYTDANKNKGITWGEETLMEYLENPKKYIPGTKMIFAGIKKKGERADLIAYLKKATNE</sequence>
<accession>P68098</accession>
<accession>P00010</accession>
<keyword id="KW-0007">Acetylation</keyword>
<keyword id="KW-0053">Apoptosis</keyword>
<keyword id="KW-0903">Direct protein sequencing</keyword>
<keyword id="KW-0249">Electron transport</keyword>
<keyword id="KW-0349">Heme</keyword>
<keyword id="KW-0408">Iron</keyword>
<keyword id="KW-0479">Metal-binding</keyword>
<keyword id="KW-0496">Mitochondrion</keyword>
<keyword id="KW-0597">Phosphoprotein</keyword>
<keyword id="KW-0679">Respiratory chain</keyword>
<keyword id="KW-0813">Transport</keyword>
<comment type="function">
    <text>Electron carrier protein. The oxidized form of the cytochrome c heme group can accept an electron from the heme group of the cytochrome c1 subunit of cytochrome reductase. Cytochrome c then transfers this electron to the cytochrome oxidase complex, the final protein carrier in the mitochondrial electron-transport chain.</text>
</comment>
<comment type="function">
    <text evidence="1">Plays a role in apoptosis. Suppression of the anti-apoptotic members or activation of the pro-apoptotic members of the Bcl-2 family leads to altered mitochondrial membrane permeability resulting in release of cytochrome c into the cytosol. Binding of cytochrome c to Apaf-1 triggers the activation of caspase-9, which then accelerates apoptosis by activating other caspases (By similarity).</text>
</comment>
<comment type="subcellular location">
    <subcellularLocation>
        <location>Mitochondrion intermembrane space</location>
    </subcellularLocation>
    <text>Loosely associated with the inner membrane.</text>
</comment>
<comment type="PTM">
    <text>Binds 1 heme c group covalently per subunit.</text>
</comment>
<comment type="PTM">
    <text evidence="1">Phosphorylation at Tyr-49 and Tyr-98 both reduce by half the turnover in the reaction with cytochrome c oxidase, down-regulating mitochondrial respiration.</text>
</comment>
<comment type="similarity">
    <text evidence="5">Belongs to the cytochrome c family.</text>
</comment>
<comment type="online information" name="Protein Spotlight">
    <link uri="https://www.proteinspotlight.org/back_issues/076"/>
    <text>Life shuttle - Issue 76 of November 2006</text>
</comment>
<reference key="1">
    <citation type="journal article" date="1977" name="Biochemistry">
        <title>Complete amino acid sequence of guanaco (Lama guanicoe) cytochrome c.</title>
        <authorList>
            <person name="Niece R.L."/>
            <person name="Margoliash E."/>
            <person name="Fitch W.M."/>
        </authorList>
    </citation>
    <scope>PROTEIN SEQUENCE OF 2-105</scope>
    <scope>ACETYLATION AT GLY-2</scope>
</reference>
<name>CYC_LAMGU</name>
<organism>
    <name type="scientific">Lama guanicoe</name>
    <name type="common">Guanaco</name>
    <name type="synonym">Lama glama guanicoe</name>
    <dbReference type="NCBI Taxonomy" id="9840"/>
    <lineage>
        <taxon>Eukaryota</taxon>
        <taxon>Metazoa</taxon>
        <taxon>Chordata</taxon>
        <taxon>Craniata</taxon>
        <taxon>Vertebrata</taxon>
        <taxon>Euteleostomi</taxon>
        <taxon>Mammalia</taxon>
        <taxon>Eutheria</taxon>
        <taxon>Laurasiatheria</taxon>
        <taxon>Artiodactyla</taxon>
        <taxon>Tylopoda</taxon>
        <taxon>Camelidae</taxon>
        <taxon>Lama</taxon>
    </lineage>
</organism>
<feature type="initiator methionine" description="Removed" evidence="4">
    <location>
        <position position="1"/>
    </location>
</feature>
<feature type="chain" id="PRO_0000108219" description="Cytochrome c">
    <location>
        <begin position="2"/>
        <end position="105"/>
    </location>
</feature>
<feature type="binding site" description="covalent">
    <location>
        <position position="15"/>
    </location>
    <ligand>
        <name>heme c</name>
        <dbReference type="ChEBI" id="CHEBI:61717"/>
    </ligand>
</feature>
<feature type="binding site" description="covalent">
    <location>
        <position position="18"/>
    </location>
    <ligand>
        <name>heme c</name>
        <dbReference type="ChEBI" id="CHEBI:61717"/>
    </ligand>
</feature>
<feature type="binding site" description="axial binding residue">
    <location>
        <position position="19"/>
    </location>
    <ligand>
        <name>heme c</name>
        <dbReference type="ChEBI" id="CHEBI:61717"/>
    </ligand>
    <ligandPart>
        <name>Fe</name>
        <dbReference type="ChEBI" id="CHEBI:18248"/>
    </ligandPart>
</feature>
<feature type="binding site" description="axial binding residue">
    <location>
        <position position="81"/>
    </location>
    <ligand>
        <name>heme c</name>
        <dbReference type="ChEBI" id="CHEBI:61717"/>
    </ligand>
    <ligandPart>
        <name>Fe</name>
        <dbReference type="ChEBI" id="CHEBI:18248"/>
    </ligandPart>
</feature>
<feature type="modified residue" description="N-acetylglycine" evidence="4">
    <location>
        <position position="2"/>
    </location>
</feature>
<feature type="modified residue" description="Phosphotyrosine" evidence="2">
    <location>
        <position position="49"/>
    </location>
</feature>
<feature type="modified residue" description="N6-succinyllysine" evidence="3">
    <location>
        <position position="56"/>
    </location>
</feature>
<feature type="modified residue" description="N6-acetyllysine; alternate" evidence="3">
    <location>
        <position position="73"/>
    </location>
</feature>
<feature type="modified residue" description="N6-succinyllysine; alternate" evidence="3">
    <location>
        <position position="73"/>
    </location>
</feature>
<feature type="modified residue" description="Phosphotyrosine" evidence="2">
    <location>
        <position position="98"/>
    </location>
</feature>
<feature type="modified residue" description="N6-acetyllysine" evidence="3">
    <location>
        <position position="100"/>
    </location>
</feature>
<dbReference type="PIR" id="A04608">
    <property type="entry name" value="CCGW"/>
</dbReference>
<dbReference type="SMR" id="P68098"/>
<dbReference type="iPTMnet" id="P68098"/>
<dbReference type="GO" id="GO:0005758">
    <property type="term" value="C:mitochondrial intermembrane space"/>
    <property type="evidence" value="ECO:0007669"/>
    <property type="project" value="UniProtKB-SubCell"/>
</dbReference>
<dbReference type="GO" id="GO:0009055">
    <property type="term" value="F:electron transfer activity"/>
    <property type="evidence" value="ECO:0007669"/>
    <property type="project" value="InterPro"/>
</dbReference>
<dbReference type="GO" id="GO:0020037">
    <property type="term" value="F:heme binding"/>
    <property type="evidence" value="ECO:0007669"/>
    <property type="project" value="InterPro"/>
</dbReference>
<dbReference type="GO" id="GO:0046872">
    <property type="term" value="F:metal ion binding"/>
    <property type="evidence" value="ECO:0007669"/>
    <property type="project" value="UniProtKB-KW"/>
</dbReference>
<dbReference type="GO" id="GO:0006915">
    <property type="term" value="P:apoptotic process"/>
    <property type="evidence" value="ECO:0007669"/>
    <property type="project" value="UniProtKB-KW"/>
</dbReference>
<dbReference type="FunFam" id="1.10.760.10:FF:000008">
    <property type="entry name" value="Cytochrome c"/>
    <property type="match status" value="1"/>
</dbReference>
<dbReference type="Gene3D" id="1.10.760.10">
    <property type="entry name" value="Cytochrome c-like domain"/>
    <property type="match status" value="1"/>
</dbReference>
<dbReference type="InterPro" id="IPR009056">
    <property type="entry name" value="Cyt_c-like_dom"/>
</dbReference>
<dbReference type="InterPro" id="IPR036909">
    <property type="entry name" value="Cyt_c-like_dom_sf"/>
</dbReference>
<dbReference type="InterPro" id="IPR002327">
    <property type="entry name" value="Cyt_c_1A/1B"/>
</dbReference>
<dbReference type="PANTHER" id="PTHR11961">
    <property type="entry name" value="CYTOCHROME C"/>
    <property type="match status" value="1"/>
</dbReference>
<dbReference type="Pfam" id="PF00034">
    <property type="entry name" value="Cytochrom_C"/>
    <property type="match status" value="1"/>
</dbReference>
<dbReference type="PRINTS" id="PR00604">
    <property type="entry name" value="CYTCHRMECIAB"/>
</dbReference>
<dbReference type="SUPFAM" id="SSF46626">
    <property type="entry name" value="Cytochrome c"/>
    <property type="match status" value="1"/>
</dbReference>
<dbReference type="PROSITE" id="PS51007">
    <property type="entry name" value="CYTC"/>
    <property type="match status" value="1"/>
</dbReference>
<gene>
    <name type="primary">CYCS</name>
    <name type="synonym">CYC</name>
</gene>
<proteinExistence type="evidence at protein level"/>